<dbReference type="EC" id="2.3.1.274" evidence="1"/>
<dbReference type="EMBL" id="AE017198">
    <property type="protein sequence ID" value="AAS09297.1"/>
    <property type="molecule type" value="Genomic_DNA"/>
</dbReference>
<dbReference type="RefSeq" id="WP_011162257.1">
    <property type="nucleotide sequence ID" value="NC_005362.1"/>
</dbReference>
<dbReference type="SMR" id="Q74IP0"/>
<dbReference type="KEGG" id="ljo:LJ_1529"/>
<dbReference type="PATRIC" id="fig|257314.6.peg.1347"/>
<dbReference type="eggNOG" id="COG0416">
    <property type="taxonomic scope" value="Bacteria"/>
</dbReference>
<dbReference type="HOGENOM" id="CLU_039379_1_1_9"/>
<dbReference type="UniPathway" id="UPA00085"/>
<dbReference type="Proteomes" id="UP000000581">
    <property type="component" value="Chromosome"/>
</dbReference>
<dbReference type="GO" id="GO:0005737">
    <property type="term" value="C:cytoplasm"/>
    <property type="evidence" value="ECO:0007669"/>
    <property type="project" value="UniProtKB-SubCell"/>
</dbReference>
<dbReference type="GO" id="GO:0043811">
    <property type="term" value="F:phosphate:acyl-[acyl carrier protein] acyltransferase activity"/>
    <property type="evidence" value="ECO:0007669"/>
    <property type="project" value="UniProtKB-UniRule"/>
</dbReference>
<dbReference type="GO" id="GO:0006633">
    <property type="term" value="P:fatty acid biosynthetic process"/>
    <property type="evidence" value="ECO:0007669"/>
    <property type="project" value="UniProtKB-UniRule"/>
</dbReference>
<dbReference type="GO" id="GO:0008654">
    <property type="term" value="P:phospholipid biosynthetic process"/>
    <property type="evidence" value="ECO:0007669"/>
    <property type="project" value="UniProtKB-KW"/>
</dbReference>
<dbReference type="Gene3D" id="3.40.718.10">
    <property type="entry name" value="Isopropylmalate Dehydrogenase"/>
    <property type="match status" value="1"/>
</dbReference>
<dbReference type="HAMAP" id="MF_00019">
    <property type="entry name" value="PlsX"/>
    <property type="match status" value="1"/>
</dbReference>
<dbReference type="InterPro" id="IPR003664">
    <property type="entry name" value="FA_synthesis"/>
</dbReference>
<dbReference type="InterPro" id="IPR012281">
    <property type="entry name" value="Phospholipid_synth_PlsX-like"/>
</dbReference>
<dbReference type="NCBIfam" id="TIGR00182">
    <property type="entry name" value="plsX"/>
    <property type="match status" value="1"/>
</dbReference>
<dbReference type="PANTHER" id="PTHR30100">
    <property type="entry name" value="FATTY ACID/PHOSPHOLIPID SYNTHESIS PROTEIN PLSX"/>
    <property type="match status" value="1"/>
</dbReference>
<dbReference type="PANTHER" id="PTHR30100:SF1">
    <property type="entry name" value="PHOSPHATE ACYLTRANSFERASE"/>
    <property type="match status" value="1"/>
</dbReference>
<dbReference type="Pfam" id="PF02504">
    <property type="entry name" value="FA_synthesis"/>
    <property type="match status" value="1"/>
</dbReference>
<dbReference type="PIRSF" id="PIRSF002465">
    <property type="entry name" value="Phsphlp_syn_PlsX"/>
    <property type="match status" value="1"/>
</dbReference>
<dbReference type="SUPFAM" id="SSF53659">
    <property type="entry name" value="Isocitrate/Isopropylmalate dehydrogenase-like"/>
    <property type="match status" value="1"/>
</dbReference>
<comment type="function">
    <text evidence="1">Catalyzes the reversible formation of acyl-phosphate (acyl-PO(4)) from acyl-[acyl-carrier-protein] (acyl-ACP). This enzyme utilizes acyl-ACP as fatty acyl donor, but not acyl-CoA.</text>
</comment>
<comment type="catalytic activity">
    <reaction evidence="1">
        <text>a fatty acyl-[ACP] + phosphate = an acyl phosphate + holo-[ACP]</text>
        <dbReference type="Rhea" id="RHEA:42292"/>
        <dbReference type="Rhea" id="RHEA-COMP:9685"/>
        <dbReference type="Rhea" id="RHEA-COMP:14125"/>
        <dbReference type="ChEBI" id="CHEBI:43474"/>
        <dbReference type="ChEBI" id="CHEBI:59918"/>
        <dbReference type="ChEBI" id="CHEBI:64479"/>
        <dbReference type="ChEBI" id="CHEBI:138651"/>
        <dbReference type="EC" id="2.3.1.274"/>
    </reaction>
</comment>
<comment type="pathway">
    <text evidence="1">Lipid metabolism; phospholipid metabolism.</text>
</comment>
<comment type="subunit">
    <text evidence="1">Homodimer. Probably interacts with PlsY.</text>
</comment>
<comment type="subcellular location">
    <subcellularLocation>
        <location evidence="1">Cytoplasm</location>
    </subcellularLocation>
    <text evidence="1">Associated with the membrane possibly through PlsY.</text>
</comment>
<comment type="similarity">
    <text evidence="1">Belongs to the PlsX family.</text>
</comment>
<accession>Q74IP0</accession>
<reference key="1">
    <citation type="journal article" date="2004" name="Proc. Natl. Acad. Sci. U.S.A.">
        <title>The genome sequence of the probiotic intestinal bacterium Lactobacillus johnsonii NCC 533.</title>
        <authorList>
            <person name="Pridmore R.D."/>
            <person name="Berger B."/>
            <person name="Desiere F."/>
            <person name="Vilanova D."/>
            <person name="Barretto C."/>
            <person name="Pittet A.-C."/>
            <person name="Zwahlen M.-C."/>
            <person name="Rouvet M."/>
            <person name="Altermann E."/>
            <person name="Barrangou R."/>
            <person name="Mollet B."/>
            <person name="Mercenier A."/>
            <person name="Klaenhammer T."/>
            <person name="Arigoni F."/>
            <person name="Schell M.A."/>
        </authorList>
    </citation>
    <scope>NUCLEOTIDE SEQUENCE [LARGE SCALE GENOMIC DNA]</scope>
    <source>
        <strain>CNCM I-1225 / La1 / NCC 533</strain>
    </source>
</reference>
<gene>
    <name evidence="1" type="primary">plsX</name>
    <name type="ordered locus">LJ_1529</name>
</gene>
<sequence>MKTIAIDAMGGENAPKAIVDAVLKAKPKLKDTKFVLFGDEEKINELIPAEQKDRIDVIATSEVIIDSDEPVKAIRRKKNSSMVVAANYVKSGKADALFSLGNTGALLACGIFIIGRIKGVERPALMPTLPSAKSEDGFNIIDVGANAQSKPEYLVQWAQMANFYAQKIRNIKNPTVALLNNGAEDDKGDALHQEAYKLLKATDLNFIGNAEGNDLMEGKADVIVTDGFTGNATLKAIEGTASVILRLLKDSLLNNGLRPKVGALLAKPGLTALKKRFDTARYGGAVLLGVNAPVVKTHGRSNIRPIYYTLLQIDKMLSQDLVGEYKKYFSESR</sequence>
<protein>
    <recommendedName>
        <fullName evidence="1">Phosphate acyltransferase</fullName>
        <ecNumber evidence="1">2.3.1.274</ecNumber>
    </recommendedName>
    <alternativeName>
        <fullName evidence="1">Acyl-ACP phosphotransacylase</fullName>
    </alternativeName>
    <alternativeName>
        <fullName evidence="1">Acyl-[acyl-carrier-protein]--phosphate acyltransferase</fullName>
    </alternativeName>
    <alternativeName>
        <fullName evidence="1">Phosphate-acyl-ACP acyltransferase</fullName>
    </alternativeName>
</protein>
<evidence type="ECO:0000255" key="1">
    <source>
        <dbReference type="HAMAP-Rule" id="MF_00019"/>
    </source>
</evidence>
<organism>
    <name type="scientific">Lactobacillus johnsonii (strain CNCM I-12250 / La1 / NCC 533)</name>
    <dbReference type="NCBI Taxonomy" id="257314"/>
    <lineage>
        <taxon>Bacteria</taxon>
        <taxon>Bacillati</taxon>
        <taxon>Bacillota</taxon>
        <taxon>Bacilli</taxon>
        <taxon>Lactobacillales</taxon>
        <taxon>Lactobacillaceae</taxon>
        <taxon>Lactobacillus</taxon>
    </lineage>
</organism>
<proteinExistence type="inferred from homology"/>
<feature type="chain" id="PRO_0000189890" description="Phosphate acyltransferase">
    <location>
        <begin position="1"/>
        <end position="333"/>
    </location>
</feature>
<name>PLSX_LACJO</name>
<keyword id="KW-0963">Cytoplasm</keyword>
<keyword id="KW-0444">Lipid biosynthesis</keyword>
<keyword id="KW-0443">Lipid metabolism</keyword>
<keyword id="KW-0594">Phospholipid biosynthesis</keyword>
<keyword id="KW-1208">Phospholipid metabolism</keyword>
<keyword id="KW-0808">Transferase</keyword>